<reference key="1">
    <citation type="journal article" date="2015" name="Microbiology">
        <title>Genome of Methanoregula boonei 6A8 reveals adaptations to oligotrophic peatland environments.</title>
        <authorList>
            <person name="Braeuer S."/>
            <person name="Cadillo-Quiroz H."/>
            <person name="Kyrpides N."/>
            <person name="Woyke T."/>
            <person name="Goodwin L."/>
            <person name="Detter C."/>
            <person name="Podell S."/>
            <person name="Yavitt J.B."/>
            <person name="Zinder S.H."/>
        </authorList>
    </citation>
    <scope>NUCLEOTIDE SEQUENCE [LARGE SCALE GENOMIC DNA]</scope>
    <source>
        <strain>DSM 21154 / JCM 14090 / 6A8</strain>
    </source>
</reference>
<organism>
    <name type="scientific">Methanoregula boonei (strain DSM 21154 / JCM 14090 / 6A8)</name>
    <dbReference type="NCBI Taxonomy" id="456442"/>
    <lineage>
        <taxon>Archaea</taxon>
        <taxon>Methanobacteriati</taxon>
        <taxon>Methanobacteriota</taxon>
        <taxon>Stenosarchaea group</taxon>
        <taxon>Methanomicrobia</taxon>
        <taxon>Methanomicrobiales</taxon>
        <taxon>Methanoregulaceae</taxon>
        <taxon>Methanoregula</taxon>
    </lineage>
</organism>
<accession>A7I656</accession>
<dbReference type="EC" id="3.6.5.3" evidence="2"/>
<dbReference type="EMBL" id="CP000780">
    <property type="protein sequence ID" value="ABS55217.1"/>
    <property type="molecule type" value="Genomic_DNA"/>
</dbReference>
<dbReference type="RefSeq" id="WP_012106239.1">
    <property type="nucleotide sequence ID" value="NC_009712.1"/>
</dbReference>
<dbReference type="SMR" id="A7I656"/>
<dbReference type="STRING" id="456442.Mboo_0699"/>
<dbReference type="GeneID" id="5411553"/>
<dbReference type="KEGG" id="mbn:Mboo_0699"/>
<dbReference type="eggNOG" id="arCOG01561">
    <property type="taxonomic scope" value="Archaea"/>
</dbReference>
<dbReference type="HOGENOM" id="CLU_007265_0_0_2"/>
<dbReference type="OrthoDB" id="371718at2157"/>
<dbReference type="Proteomes" id="UP000002408">
    <property type="component" value="Chromosome"/>
</dbReference>
<dbReference type="GO" id="GO:0005737">
    <property type="term" value="C:cytoplasm"/>
    <property type="evidence" value="ECO:0007669"/>
    <property type="project" value="UniProtKB-SubCell"/>
</dbReference>
<dbReference type="GO" id="GO:0005525">
    <property type="term" value="F:GTP binding"/>
    <property type="evidence" value="ECO:0007669"/>
    <property type="project" value="UniProtKB-UniRule"/>
</dbReference>
<dbReference type="GO" id="GO:0003924">
    <property type="term" value="F:GTPase activity"/>
    <property type="evidence" value="ECO:0007669"/>
    <property type="project" value="InterPro"/>
</dbReference>
<dbReference type="GO" id="GO:0003746">
    <property type="term" value="F:translation elongation factor activity"/>
    <property type="evidence" value="ECO:0007669"/>
    <property type="project" value="UniProtKB-UniRule"/>
</dbReference>
<dbReference type="CDD" id="cd01883">
    <property type="entry name" value="EF1_alpha"/>
    <property type="match status" value="1"/>
</dbReference>
<dbReference type="CDD" id="cd03693">
    <property type="entry name" value="EF1_alpha_II"/>
    <property type="match status" value="1"/>
</dbReference>
<dbReference type="CDD" id="cd03705">
    <property type="entry name" value="EF1_alpha_III"/>
    <property type="match status" value="1"/>
</dbReference>
<dbReference type="FunFam" id="2.40.30.10:FF:000003">
    <property type="entry name" value="Elongation factor 1-alpha"/>
    <property type="match status" value="1"/>
</dbReference>
<dbReference type="FunFam" id="2.40.30.10:FF:000005">
    <property type="entry name" value="Elongation factor 1-alpha"/>
    <property type="match status" value="1"/>
</dbReference>
<dbReference type="Gene3D" id="3.40.50.300">
    <property type="entry name" value="P-loop containing nucleotide triphosphate hydrolases"/>
    <property type="match status" value="1"/>
</dbReference>
<dbReference type="Gene3D" id="2.40.30.10">
    <property type="entry name" value="Translation factors"/>
    <property type="match status" value="2"/>
</dbReference>
<dbReference type="HAMAP" id="MF_00118_A">
    <property type="entry name" value="EF_Tu_A"/>
    <property type="match status" value="1"/>
</dbReference>
<dbReference type="InterPro" id="IPR004161">
    <property type="entry name" value="EFTu-like_2"/>
</dbReference>
<dbReference type="InterPro" id="IPR031157">
    <property type="entry name" value="G_TR_CS"/>
</dbReference>
<dbReference type="InterPro" id="IPR054696">
    <property type="entry name" value="GTP-eEF1A_C"/>
</dbReference>
<dbReference type="InterPro" id="IPR027417">
    <property type="entry name" value="P-loop_NTPase"/>
</dbReference>
<dbReference type="InterPro" id="IPR005225">
    <property type="entry name" value="Small_GTP-bd"/>
</dbReference>
<dbReference type="InterPro" id="IPR000795">
    <property type="entry name" value="T_Tr_GTP-bd_dom"/>
</dbReference>
<dbReference type="InterPro" id="IPR050100">
    <property type="entry name" value="TRAFAC_GTPase_members"/>
</dbReference>
<dbReference type="InterPro" id="IPR009000">
    <property type="entry name" value="Transl_B-barrel_sf"/>
</dbReference>
<dbReference type="InterPro" id="IPR009001">
    <property type="entry name" value="Transl_elong_EF1A/Init_IF2_C"/>
</dbReference>
<dbReference type="InterPro" id="IPR004539">
    <property type="entry name" value="Transl_elong_EF1A_euk/arc"/>
</dbReference>
<dbReference type="NCBIfam" id="TIGR00483">
    <property type="entry name" value="EF-1_alpha"/>
    <property type="match status" value="1"/>
</dbReference>
<dbReference type="NCBIfam" id="NF008969">
    <property type="entry name" value="PRK12317.1"/>
    <property type="match status" value="1"/>
</dbReference>
<dbReference type="NCBIfam" id="TIGR00231">
    <property type="entry name" value="small_GTP"/>
    <property type="match status" value="1"/>
</dbReference>
<dbReference type="PANTHER" id="PTHR23115">
    <property type="entry name" value="TRANSLATION FACTOR"/>
    <property type="match status" value="1"/>
</dbReference>
<dbReference type="Pfam" id="PF22594">
    <property type="entry name" value="GTP-eEF1A_C"/>
    <property type="match status" value="1"/>
</dbReference>
<dbReference type="Pfam" id="PF00009">
    <property type="entry name" value="GTP_EFTU"/>
    <property type="match status" value="1"/>
</dbReference>
<dbReference type="Pfam" id="PF03144">
    <property type="entry name" value="GTP_EFTU_D2"/>
    <property type="match status" value="1"/>
</dbReference>
<dbReference type="PRINTS" id="PR00315">
    <property type="entry name" value="ELONGATNFCT"/>
</dbReference>
<dbReference type="SUPFAM" id="SSF50465">
    <property type="entry name" value="EF-Tu/eEF-1alpha/eIF2-gamma C-terminal domain"/>
    <property type="match status" value="1"/>
</dbReference>
<dbReference type="SUPFAM" id="SSF52540">
    <property type="entry name" value="P-loop containing nucleoside triphosphate hydrolases"/>
    <property type="match status" value="1"/>
</dbReference>
<dbReference type="SUPFAM" id="SSF50447">
    <property type="entry name" value="Translation proteins"/>
    <property type="match status" value="1"/>
</dbReference>
<dbReference type="PROSITE" id="PS00301">
    <property type="entry name" value="G_TR_1"/>
    <property type="match status" value="1"/>
</dbReference>
<dbReference type="PROSITE" id="PS51722">
    <property type="entry name" value="G_TR_2"/>
    <property type="match status" value="1"/>
</dbReference>
<proteinExistence type="inferred from homology"/>
<feature type="chain" id="PRO_1000015686" description="Elongation factor 1-alpha">
    <location>
        <begin position="1"/>
        <end position="425"/>
    </location>
</feature>
<feature type="domain" description="tr-type G">
    <location>
        <begin position="5"/>
        <end position="221"/>
    </location>
</feature>
<feature type="region of interest" description="G1" evidence="1">
    <location>
        <begin position="14"/>
        <end position="21"/>
    </location>
</feature>
<feature type="region of interest" description="G2" evidence="1">
    <location>
        <begin position="70"/>
        <end position="74"/>
    </location>
</feature>
<feature type="region of interest" description="G3" evidence="1">
    <location>
        <begin position="91"/>
        <end position="94"/>
    </location>
</feature>
<feature type="region of interest" description="G4" evidence="1">
    <location>
        <begin position="146"/>
        <end position="149"/>
    </location>
</feature>
<feature type="region of interest" description="G5" evidence="1">
    <location>
        <begin position="185"/>
        <end position="187"/>
    </location>
</feature>
<feature type="binding site" evidence="2">
    <location>
        <begin position="14"/>
        <end position="21"/>
    </location>
    <ligand>
        <name>GTP</name>
        <dbReference type="ChEBI" id="CHEBI:37565"/>
    </ligand>
</feature>
<feature type="binding site" evidence="2">
    <location>
        <position position="21"/>
    </location>
    <ligand>
        <name>Mg(2+)</name>
        <dbReference type="ChEBI" id="CHEBI:18420"/>
    </ligand>
</feature>
<feature type="binding site" evidence="2">
    <location>
        <begin position="91"/>
        <end position="95"/>
    </location>
    <ligand>
        <name>GTP</name>
        <dbReference type="ChEBI" id="CHEBI:37565"/>
    </ligand>
</feature>
<feature type="binding site" evidence="2">
    <location>
        <begin position="146"/>
        <end position="149"/>
    </location>
    <ligand>
        <name>GTP</name>
        <dbReference type="ChEBI" id="CHEBI:37565"/>
    </ligand>
</feature>
<evidence type="ECO:0000250" key="1"/>
<evidence type="ECO:0000255" key="2">
    <source>
        <dbReference type="HAMAP-Rule" id="MF_00118"/>
    </source>
</evidence>
<name>EF1A_METB6</name>
<protein>
    <recommendedName>
        <fullName evidence="2">Elongation factor 1-alpha</fullName>
        <shortName evidence="2">EF-1-alpha</shortName>
        <ecNumber evidence="2">3.6.5.3</ecNumber>
    </recommendedName>
    <alternativeName>
        <fullName evidence="2">Elongation factor Tu</fullName>
        <shortName evidence="2">EF-Tu</shortName>
    </alternativeName>
</protein>
<gene>
    <name evidence="2" type="primary">tuf</name>
    <name type="ordered locus">Mboo_0699</name>
</gene>
<comment type="function">
    <text evidence="2">GTP hydrolase that promotes the GTP-dependent binding of aminoacyl-tRNA to the A-site of ribosomes during protein biosynthesis.</text>
</comment>
<comment type="catalytic activity">
    <reaction evidence="2">
        <text>GTP + H2O = GDP + phosphate + H(+)</text>
        <dbReference type="Rhea" id="RHEA:19669"/>
        <dbReference type="ChEBI" id="CHEBI:15377"/>
        <dbReference type="ChEBI" id="CHEBI:15378"/>
        <dbReference type="ChEBI" id="CHEBI:37565"/>
        <dbReference type="ChEBI" id="CHEBI:43474"/>
        <dbReference type="ChEBI" id="CHEBI:58189"/>
        <dbReference type="EC" id="3.6.5.3"/>
    </reaction>
    <physiologicalReaction direction="left-to-right" evidence="2">
        <dbReference type="Rhea" id="RHEA:19670"/>
    </physiologicalReaction>
</comment>
<comment type="subcellular location">
    <subcellularLocation>
        <location evidence="2">Cytoplasm</location>
    </subcellularLocation>
</comment>
<comment type="similarity">
    <text evidence="2">Belongs to the TRAFAC class translation factor GTPase superfamily. Classic translation factor GTPase family. EF-Tu/EF-1A subfamily.</text>
</comment>
<keyword id="KW-0963">Cytoplasm</keyword>
<keyword id="KW-0251">Elongation factor</keyword>
<keyword id="KW-0342">GTP-binding</keyword>
<keyword id="KW-0378">Hydrolase</keyword>
<keyword id="KW-0460">Magnesium</keyword>
<keyword id="KW-0479">Metal-binding</keyword>
<keyword id="KW-0547">Nucleotide-binding</keyword>
<keyword id="KW-0648">Protein biosynthesis</keyword>
<keyword id="KW-1185">Reference proteome</keyword>
<sequence>MAADKPHMNLAVIGHIDHGKSTTVGRMMFETGAVPAHIIEAYRKEAESKGKATFEFAWVMDNLKEERERGITIDIAHKRFDTPKYYFTVVDCPGHRDFVKNMITGASQADAAILVVAAPDGVMEQTKEHVFLARTLGITQIIIAINKMDAVKFDEKRFNEVKKELSDLIKMVGYKPEETLFIPISSLQGINIKANSPETPWYKGPALIPALDTFKEPSKPTDKPLRLPIQDSYSISGIGTVPVGRVETGIMKKGMKVSFMPANKDGEIKSIEMHHEEIPQAVPGDNVGFNVRGIAKGDIRRGDVCGPAEQPPTVADEFTAQVVVLQHPSAITVGYTPVFHCHTTQTACTFIELKKKLDPRSGQTKEENPTFLKTGDAAIVQIKPTKPMVIENVKELPQLGRFAVRDMGSTIAAGMCIAIQPKQMR</sequence>